<feature type="chain" id="PRO_0000368800" description="ATP synthase subunit b">
    <location>
        <begin position="1"/>
        <end position="164"/>
    </location>
</feature>
<feature type="transmembrane region" description="Helical" evidence="1">
    <location>
        <begin position="6"/>
        <end position="26"/>
    </location>
</feature>
<accession>Q04HT5</accession>
<proteinExistence type="inferred from homology"/>
<name>ATPF_STRP2</name>
<reference key="1">
    <citation type="journal article" date="2007" name="J. Bacteriol.">
        <title>Genome sequence of Avery's virulent serotype 2 strain D39 of Streptococcus pneumoniae and comparison with that of unencapsulated laboratory strain R6.</title>
        <authorList>
            <person name="Lanie J.A."/>
            <person name="Ng W.-L."/>
            <person name="Kazmierczak K.M."/>
            <person name="Andrzejewski T.M."/>
            <person name="Davidsen T.M."/>
            <person name="Wayne K.J."/>
            <person name="Tettelin H."/>
            <person name="Glass J.I."/>
            <person name="Winkler M.E."/>
        </authorList>
    </citation>
    <scope>NUCLEOTIDE SEQUENCE [LARGE SCALE GENOMIC DNA]</scope>
    <source>
        <strain>D39 / NCTC 7466</strain>
    </source>
</reference>
<gene>
    <name evidence="1" type="primary">atpF</name>
    <name type="ordered locus">SPD_1339</name>
</gene>
<sequence>MHVTVGELIGNFILITGSFILLLVLIKKFAWSNITGIFEERAEKIASDIDRAEEARQKAEVLAQKREDELAGSRKEAKTIIENAKETAEQSKANILADAKLEAGHLKEKANQEIAQNKVEALQSVKGEVADLTISLAGKIISQNLDSHAHKALIDQYIDQLGEA</sequence>
<protein>
    <recommendedName>
        <fullName evidence="1">ATP synthase subunit b</fullName>
    </recommendedName>
    <alternativeName>
        <fullName evidence="1">ATP synthase F(0) sector subunit b</fullName>
    </alternativeName>
    <alternativeName>
        <fullName evidence="1">ATPase subunit I</fullName>
    </alternativeName>
    <alternativeName>
        <fullName evidence="1">F-type ATPase subunit b</fullName>
        <shortName evidence="1">F-ATPase subunit b</shortName>
    </alternativeName>
</protein>
<evidence type="ECO:0000255" key="1">
    <source>
        <dbReference type="HAMAP-Rule" id="MF_01398"/>
    </source>
</evidence>
<organism>
    <name type="scientific">Streptococcus pneumoniae serotype 2 (strain D39 / NCTC 7466)</name>
    <dbReference type="NCBI Taxonomy" id="373153"/>
    <lineage>
        <taxon>Bacteria</taxon>
        <taxon>Bacillati</taxon>
        <taxon>Bacillota</taxon>
        <taxon>Bacilli</taxon>
        <taxon>Lactobacillales</taxon>
        <taxon>Streptococcaceae</taxon>
        <taxon>Streptococcus</taxon>
    </lineage>
</organism>
<keyword id="KW-0066">ATP synthesis</keyword>
<keyword id="KW-1003">Cell membrane</keyword>
<keyword id="KW-0138">CF(0)</keyword>
<keyword id="KW-0375">Hydrogen ion transport</keyword>
<keyword id="KW-0406">Ion transport</keyword>
<keyword id="KW-0472">Membrane</keyword>
<keyword id="KW-1185">Reference proteome</keyword>
<keyword id="KW-0812">Transmembrane</keyword>
<keyword id="KW-1133">Transmembrane helix</keyword>
<keyword id="KW-0813">Transport</keyword>
<dbReference type="EMBL" id="CP000410">
    <property type="protein sequence ID" value="ABJ53806.1"/>
    <property type="molecule type" value="Genomic_DNA"/>
</dbReference>
<dbReference type="RefSeq" id="WP_000558554.1">
    <property type="nucleotide sequence ID" value="NZ_JAMLJR010000008.1"/>
</dbReference>
<dbReference type="SMR" id="Q04HT5"/>
<dbReference type="PaxDb" id="373153-SPD_1339"/>
<dbReference type="GeneID" id="45653249"/>
<dbReference type="KEGG" id="spd:SPD_1339"/>
<dbReference type="eggNOG" id="COG0711">
    <property type="taxonomic scope" value="Bacteria"/>
</dbReference>
<dbReference type="HOGENOM" id="CLU_079215_4_2_9"/>
<dbReference type="BioCyc" id="SPNE373153:G1G6V-1444-MONOMER"/>
<dbReference type="Proteomes" id="UP000001452">
    <property type="component" value="Chromosome"/>
</dbReference>
<dbReference type="GO" id="GO:0005886">
    <property type="term" value="C:plasma membrane"/>
    <property type="evidence" value="ECO:0007669"/>
    <property type="project" value="UniProtKB-SubCell"/>
</dbReference>
<dbReference type="GO" id="GO:0045259">
    <property type="term" value="C:proton-transporting ATP synthase complex"/>
    <property type="evidence" value="ECO:0007669"/>
    <property type="project" value="UniProtKB-KW"/>
</dbReference>
<dbReference type="GO" id="GO:0046933">
    <property type="term" value="F:proton-transporting ATP synthase activity, rotational mechanism"/>
    <property type="evidence" value="ECO:0007669"/>
    <property type="project" value="UniProtKB-UniRule"/>
</dbReference>
<dbReference type="GO" id="GO:0046961">
    <property type="term" value="F:proton-transporting ATPase activity, rotational mechanism"/>
    <property type="evidence" value="ECO:0007669"/>
    <property type="project" value="TreeGrafter"/>
</dbReference>
<dbReference type="CDD" id="cd06503">
    <property type="entry name" value="ATP-synt_Fo_b"/>
    <property type="match status" value="1"/>
</dbReference>
<dbReference type="Gene3D" id="6.10.250.1580">
    <property type="match status" value="1"/>
</dbReference>
<dbReference type="HAMAP" id="MF_01398">
    <property type="entry name" value="ATP_synth_b_bprime"/>
    <property type="match status" value="1"/>
</dbReference>
<dbReference type="InterPro" id="IPR028987">
    <property type="entry name" value="ATP_synth_B-like_membr_sf"/>
</dbReference>
<dbReference type="InterPro" id="IPR002146">
    <property type="entry name" value="ATP_synth_b/b'su_bac/chlpt"/>
</dbReference>
<dbReference type="InterPro" id="IPR005864">
    <property type="entry name" value="ATP_synth_F0_bsu_bac"/>
</dbReference>
<dbReference type="InterPro" id="IPR050059">
    <property type="entry name" value="ATP_synthase_B_chain"/>
</dbReference>
<dbReference type="NCBIfam" id="TIGR01144">
    <property type="entry name" value="ATP_synt_b"/>
    <property type="match status" value="1"/>
</dbReference>
<dbReference type="PANTHER" id="PTHR33445:SF1">
    <property type="entry name" value="ATP SYNTHASE SUBUNIT B"/>
    <property type="match status" value="1"/>
</dbReference>
<dbReference type="PANTHER" id="PTHR33445">
    <property type="entry name" value="ATP SYNTHASE SUBUNIT B', CHLOROPLASTIC"/>
    <property type="match status" value="1"/>
</dbReference>
<dbReference type="Pfam" id="PF00430">
    <property type="entry name" value="ATP-synt_B"/>
    <property type="match status" value="1"/>
</dbReference>
<dbReference type="SUPFAM" id="SSF81573">
    <property type="entry name" value="F1F0 ATP synthase subunit B, membrane domain"/>
    <property type="match status" value="1"/>
</dbReference>
<comment type="function">
    <text evidence="1">F(1)F(0) ATP synthase produces ATP from ADP in the presence of a proton or sodium gradient. F-type ATPases consist of two structural domains, F(1) containing the extramembraneous catalytic core and F(0) containing the membrane proton channel, linked together by a central stalk and a peripheral stalk. During catalysis, ATP synthesis in the catalytic domain of F(1) is coupled via a rotary mechanism of the central stalk subunits to proton translocation.</text>
</comment>
<comment type="function">
    <text evidence="1">Component of the F(0) channel, it forms part of the peripheral stalk, linking F(1) to F(0).</text>
</comment>
<comment type="subunit">
    <text evidence="1">F-type ATPases have 2 components, F(1) - the catalytic core - and F(0) - the membrane proton channel. F(1) has five subunits: alpha(3), beta(3), gamma(1), delta(1), epsilon(1). F(0) has three main subunits: a(1), b(2) and c(10-14). The alpha and beta chains form an alternating ring which encloses part of the gamma chain. F(1) is attached to F(0) by a central stalk formed by the gamma and epsilon chains, while a peripheral stalk is formed by the delta and b chains.</text>
</comment>
<comment type="subcellular location">
    <subcellularLocation>
        <location evidence="1">Cell membrane</location>
        <topology evidence="1">Single-pass membrane protein</topology>
    </subcellularLocation>
</comment>
<comment type="similarity">
    <text evidence="1">Belongs to the ATPase B chain family.</text>
</comment>